<name>RPOC2_CALFG</name>
<geneLocation type="chloroplast"/>
<keyword id="KW-0150">Chloroplast</keyword>
<keyword id="KW-0240">DNA-directed RNA polymerase</keyword>
<keyword id="KW-0479">Metal-binding</keyword>
<keyword id="KW-0548">Nucleotidyltransferase</keyword>
<keyword id="KW-0934">Plastid</keyword>
<keyword id="KW-0804">Transcription</keyword>
<keyword id="KW-0808">Transferase</keyword>
<keyword id="KW-0862">Zinc</keyword>
<organism>
    <name type="scientific">Calycanthus floridus var. glaucus</name>
    <name type="common">Eastern sweetshrub</name>
    <name type="synonym">Calycanthus fertilis var. ferax</name>
    <dbReference type="NCBI Taxonomy" id="212734"/>
    <lineage>
        <taxon>Eukaryota</taxon>
        <taxon>Viridiplantae</taxon>
        <taxon>Streptophyta</taxon>
        <taxon>Embryophyta</taxon>
        <taxon>Tracheophyta</taxon>
        <taxon>Spermatophyta</taxon>
        <taxon>Magnoliopsida</taxon>
        <taxon>Magnoliidae</taxon>
        <taxon>Laurales</taxon>
        <taxon>Calycanthaceae</taxon>
        <taxon>Calycanthus</taxon>
    </lineage>
</organism>
<comment type="function">
    <text evidence="1">DNA-dependent RNA polymerase catalyzes the transcription of DNA into RNA using the four ribonucleoside triphosphates as substrates.</text>
</comment>
<comment type="catalytic activity">
    <reaction evidence="1">
        <text>RNA(n) + a ribonucleoside 5'-triphosphate = RNA(n+1) + diphosphate</text>
        <dbReference type="Rhea" id="RHEA:21248"/>
        <dbReference type="Rhea" id="RHEA-COMP:14527"/>
        <dbReference type="Rhea" id="RHEA-COMP:17342"/>
        <dbReference type="ChEBI" id="CHEBI:33019"/>
        <dbReference type="ChEBI" id="CHEBI:61557"/>
        <dbReference type="ChEBI" id="CHEBI:140395"/>
        <dbReference type="EC" id="2.7.7.6"/>
    </reaction>
</comment>
<comment type="cofactor">
    <cofactor evidence="1">
        <name>Zn(2+)</name>
        <dbReference type="ChEBI" id="CHEBI:29105"/>
    </cofactor>
    <text evidence="1">Binds 1 Zn(2+) ion per subunit.</text>
</comment>
<comment type="subunit">
    <text evidence="1">In plastids the minimal PEP RNA polymerase catalytic core is composed of four subunits: alpha, beta, beta', and beta''. When a (nuclear-encoded) sigma factor is associated with the core the holoenzyme is formed, which can initiate transcription.</text>
</comment>
<comment type="subcellular location">
    <subcellularLocation>
        <location evidence="1">Plastid</location>
        <location evidence="1">Chloroplast</location>
    </subcellularLocation>
</comment>
<comment type="similarity">
    <text evidence="1">Belongs to the RNA polymerase beta' chain family. RpoC2 subfamily.</text>
</comment>
<accession>Q7YJY0</accession>
<dbReference type="EC" id="2.7.7.6" evidence="1"/>
<dbReference type="EMBL" id="AJ428413">
    <property type="protein sequence ID" value="CAD28711.1"/>
    <property type="molecule type" value="Genomic_DNA"/>
</dbReference>
<dbReference type="RefSeq" id="NP_862744.2">
    <property type="nucleotide sequence ID" value="NC_004993.1"/>
</dbReference>
<dbReference type="SMR" id="Q7YJY0"/>
<dbReference type="GeneID" id="2598034"/>
<dbReference type="GO" id="GO:0009507">
    <property type="term" value="C:chloroplast"/>
    <property type="evidence" value="ECO:0007669"/>
    <property type="project" value="UniProtKB-SubCell"/>
</dbReference>
<dbReference type="GO" id="GO:0000428">
    <property type="term" value="C:DNA-directed RNA polymerase complex"/>
    <property type="evidence" value="ECO:0007669"/>
    <property type="project" value="UniProtKB-KW"/>
</dbReference>
<dbReference type="GO" id="GO:0005739">
    <property type="term" value="C:mitochondrion"/>
    <property type="evidence" value="ECO:0007669"/>
    <property type="project" value="GOC"/>
</dbReference>
<dbReference type="GO" id="GO:0003677">
    <property type="term" value="F:DNA binding"/>
    <property type="evidence" value="ECO:0007669"/>
    <property type="project" value="UniProtKB-UniRule"/>
</dbReference>
<dbReference type="GO" id="GO:0003899">
    <property type="term" value="F:DNA-directed RNA polymerase activity"/>
    <property type="evidence" value="ECO:0007669"/>
    <property type="project" value="UniProtKB-UniRule"/>
</dbReference>
<dbReference type="GO" id="GO:0008270">
    <property type="term" value="F:zinc ion binding"/>
    <property type="evidence" value="ECO:0007669"/>
    <property type="project" value="UniProtKB-UniRule"/>
</dbReference>
<dbReference type="GO" id="GO:0006351">
    <property type="term" value="P:DNA-templated transcription"/>
    <property type="evidence" value="ECO:0007669"/>
    <property type="project" value="UniProtKB-UniRule"/>
</dbReference>
<dbReference type="CDD" id="cd02655">
    <property type="entry name" value="RNAP_beta'_C"/>
    <property type="match status" value="1"/>
</dbReference>
<dbReference type="FunFam" id="1.10.132.30:FF:000002">
    <property type="entry name" value="DNA-directed RNA polymerase subunit beta"/>
    <property type="match status" value="1"/>
</dbReference>
<dbReference type="FunFam" id="1.10.1790.20:FF:000002">
    <property type="entry name" value="DNA-directed RNA polymerase subunit beta"/>
    <property type="match status" value="1"/>
</dbReference>
<dbReference type="Gene3D" id="1.10.132.30">
    <property type="match status" value="1"/>
</dbReference>
<dbReference type="Gene3D" id="1.10.150.390">
    <property type="match status" value="1"/>
</dbReference>
<dbReference type="Gene3D" id="1.10.1790.20">
    <property type="match status" value="1"/>
</dbReference>
<dbReference type="Gene3D" id="1.10.274.100">
    <property type="entry name" value="RNA polymerase Rpb1, domain 3"/>
    <property type="match status" value="1"/>
</dbReference>
<dbReference type="HAMAP" id="MF_01324">
    <property type="entry name" value="RNApol_bact_RpoC2"/>
    <property type="match status" value="1"/>
</dbReference>
<dbReference type="InterPro" id="IPR012756">
    <property type="entry name" value="DNA-dir_RpoC2_beta_pp"/>
</dbReference>
<dbReference type="InterPro" id="IPR050254">
    <property type="entry name" value="RNA_pol_beta''_euk"/>
</dbReference>
<dbReference type="InterPro" id="IPR042102">
    <property type="entry name" value="RNA_pol_Rpb1_3_sf"/>
</dbReference>
<dbReference type="InterPro" id="IPR007083">
    <property type="entry name" value="RNA_pol_Rpb1_4"/>
</dbReference>
<dbReference type="InterPro" id="IPR007081">
    <property type="entry name" value="RNA_pol_Rpb1_5"/>
</dbReference>
<dbReference type="InterPro" id="IPR038120">
    <property type="entry name" value="Rpb1_funnel_sf"/>
</dbReference>
<dbReference type="NCBIfam" id="TIGR02388">
    <property type="entry name" value="rpoC2_cyan"/>
    <property type="match status" value="1"/>
</dbReference>
<dbReference type="PANTHER" id="PTHR34995">
    <property type="entry name" value="DNA-DIRECTED RNA POLYMERASE SUBUNIT BETA"/>
    <property type="match status" value="1"/>
</dbReference>
<dbReference type="PANTHER" id="PTHR34995:SF1">
    <property type="entry name" value="DNA-DIRECTED RNA POLYMERASE SUBUNIT BETA"/>
    <property type="match status" value="1"/>
</dbReference>
<dbReference type="Pfam" id="PF05000">
    <property type="entry name" value="RNA_pol_Rpb1_4"/>
    <property type="match status" value="1"/>
</dbReference>
<dbReference type="Pfam" id="PF04998">
    <property type="entry name" value="RNA_pol_Rpb1_5"/>
    <property type="match status" value="2"/>
</dbReference>
<dbReference type="SUPFAM" id="SSF64484">
    <property type="entry name" value="beta and beta-prime subunits of DNA dependent RNA-polymerase"/>
    <property type="match status" value="1"/>
</dbReference>
<feature type="chain" id="PRO_0000067917" description="DNA-directed RNA polymerase subunit beta''">
    <location>
        <begin position="1"/>
        <end position="1377"/>
    </location>
</feature>
<feature type="binding site" evidence="1">
    <location>
        <position position="224"/>
    </location>
    <ligand>
        <name>Zn(2+)</name>
        <dbReference type="ChEBI" id="CHEBI:29105"/>
    </ligand>
</feature>
<feature type="binding site" evidence="1">
    <location>
        <position position="294"/>
    </location>
    <ligand>
        <name>Zn(2+)</name>
        <dbReference type="ChEBI" id="CHEBI:29105"/>
    </ligand>
</feature>
<feature type="binding site" evidence="1">
    <location>
        <position position="301"/>
    </location>
    <ligand>
        <name>Zn(2+)</name>
        <dbReference type="ChEBI" id="CHEBI:29105"/>
    </ligand>
</feature>
<feature type="binding site" evidence="1">
    <location>
        <position position="304"/>
    </location>
    <ligand>
        <name>Zn(2+)</name>
        <dbReference type="ChEBI" id="CHEBI:29105"/>
    </ligand>
</feature>
<sequence length="1377" mass="156094">MEVLMAERADLVFHNKVIDGAAMKRLISRLIDHFGMAYTSHILDQVKTLGFQQATTTSISLGIDDLLTIPSKGWLVQDAEQQSLILEKHHHYGNVHAVEKLRQSIEIWYATSEYLRQEMHPNFRMTDPSNPVHIMSFSGARGNASQVHQLVGMRGLMSDPQGQMIDLPIQSNLREGLSLTEYIISCYGARKGVVDTAVRTSDAGYLTRRLVEVVQHIVVRRTDCGTIRGISVSPRNGMTERIWIQTLIGRVLAYDIYMGPRCIAARNQDIGIGLVNRFITFRAQPIYIRTPFLCRSTSWICRLCYGRSPAHGDLVELGEAVGIIAGQSIGEPGTQLTLRTFHTGGVFTGGTAEHVRAPFNGKIQFNEDLVHPTRTRHGHPAFLCYTDLYVTIESHDILHNVNIPQKSFLLVQNDQYVESEQVIAEIRAGTSTFNLKVKEKVRKHIYSDSEGEMHWSTDVYHAPEYTYGNVHLLPKTSHLWILSGGLCRSSIVPFSLHKDQDQMNVHSLSVEQRYISDLSVTNVRVRHKLFSSDSSGKKGGRAPDYSGPDRIISNGHWNFIYPAILHENSDLLAKRRRNRFIIPFQSDQEREKELMPRSGISIEIPINGILRRNSILAYFDDPRYRRSSSGITKYGTIGVDSIVKKEDLIEYRRAKEFRPKYQMKVDRFFFIPEEVHILPASSPVMVRNNSIIGVNTRIALNTRSRVGGLVRVERKKKRIELKIFSGDIHFPGETDKISRHSGILIPPGTGKKNVKESKKWKNWIYVQRITPTKKKYFVLVRPVVTYEIADGINLETLFPQDPLQERDNVQLRVVNYILYGNGKPIRGISHTSLQLVRTCLVLNWDQDRNGSIEEVHASFVEVRANGLIRDFLKIDLVKSPILYSGKRNDTTSSGFIPNNGSDRTNINPFYFKARIQSLTQHQGTIRTLLNRNKECQSFLILSSSDCSRIGSFNGSKSHKVTKESITIKEDPTIPIRNSLGPLGTVPKIANFDSSYYLITHNQILLNKYLSLDNLKQTFQVLKYYLMDENGRIYNPDPRSNIIFNPFDLNWCFLPHDYCEETSTIINPGQFICENVCISKYGPHIKSGQILIVRVDSLVIRSAKPHLATPGATVHGHCGEILYEGDTLVTFIYEKSRSGDITQGLPKVEQVLEARSIDSISMNLEKRVEGWNERITKILGIPWGFLIGAELTIAQSRISLVNKIQKVYRSQGVQIHNRHIEIIVRQITSRVLVSEDGMSNVFSPGELIGLLRAERTGRALEEAICYRAILLGITRASLNTQSFISEASFQETARVLAKAALRGRIDWLKGLKENVVLGGMMPVGTGFKGLVRRSRQHNNIPLEIKKKNLFEGEMRDILFHHRELFDSCIPNNFPDTLE</sequence>
<gene>
    <name evidence="1" type="primary">rpoC2</name>
</gene>
<proteinExistence type="inferred from homology"/>
<reference key="1">
    <citation type="journal article" date="2003" name="Plant Syst. Evol.">
        <title>The chloroplast genome of the 'basal' angiosperm Calycanthus fertilis -- structural and phylogenetic analyses.</title>
        <authorList>
            <person name="Goremykin V."/>
            <person name="Hirsch-Ernst K.I."/>
            <person name="Woelfl S."/>
            <person name="Hellwig F.H."/>
        </authorList>
    </citation>
    <scope>NUCLEOTIDE SEQUENCE [LARGE SCALE GENOMIC DNA]</scope>
</reference>
<protein>
    <recommendedName>
        <fullName evidence="1">DNA-directed RNA polymerase subunit beta''</fullName>
        <ecNumber evidence="1">2.7.7.6</ecNumber>
    </recommendedName>
    <alternativeName>
        <fullName evidence="1">PEP</fullName>
    </alternativeName>
    <alternativeName>
        <fullName evidence="1">Plastid-encoded RNA polymerase subunit beta''</fullName>
        <shortName evidence="1">RNA polymerase subunit beta''</shortName>
    </alternativeName>
</protein>
<evidence type="ECO:0000255" key="1">
    <source>
        <dbReference type="HAMAP-Rule" id="MF_01324"/>
    </source>
</evidence>